<feature type="signal peptide" evidence="2">
    <location>
        <begin position="1"/>
        <end position="21"/>
    </location>
</feature>
<feature type="chain" id="PRO_0000395088" description="Probable endo-1,3(4)-beta-glucanase AFUA_2G14360">
    <location>
        <begin position="22"/>
        <end position="630"/>
    </location>
</feature>
<feature type="propeptide" id="PRO_0000395089" description="Removed in mature form" evidence="2">
    <location>
        <begin position="631"/>
        <end position="652"/>
    </location>
</feature>
<feature type="domain" description="GH16" evidence="3">
    <location>
        <begin position="36"/>
        <end position="289"/>
    </location>
</feature>
<feature type="region of interest" description="Disordered" evidence="4">
    <location>
        <begin position="379"/>
        <end position="423"/>
    </location>
</feature>
<feature type="region of interest" description="Disordered" evidence="4">
    <location>
        <begin position="509"/>
        <end position="551"/>
    </location>
</feature>
<feature type="compositionally biased region" description="Polar residues" evidence="4">
    <location>
        <begin position="390"/>
        <end position="410"/>
    </location>
</feature>
<feature type="compositionally biased region" description="Acidic residues" evidence="4">
    <location>
        <begin position="529"/>
        <end position="540"/>
    </location>
</feature>
<feature type="active site" description="Nucleophile" evidence="1">
    <location>
        <position position="145"/>
    </location>
</feature>
<feature type="active site" description="Proton donor" evidence="1">
    <location>
        <position position="150"/>
    </location>
</feature>
<feature type="lipid moiety-binding region" description="GPI-anchor amidated asparagine" evidence="2">
    <location>
        <position position="630"/>
    </location>
</feature>
<feature type="glycosylation site" description="N-linked (GlcNAc...) asparagine" evidence="2">
    <location>
        <position position="64"/>
    </location>
</feature>
<feature type="glycosylation site" description="N-linked (GlcNAc...) asparagine" evidence="2">
    <location>
        <position position="200"/>
    </location>
</feature>
<feature type="glycosylation site" description="N-linked (GlcNAc...) asparagine" evidence="2">
    <location>
        <position position="208"/>
    </location>
</feature>
<feature type="glycosylation site" description="N-linked (GlcNAc...) asparagine" evidence="2">
    <location>
        <position position="453"/>
    </location>
</feature>
<keyword id="KW-0119">Carbohydrate metabolism</keyword>
<keyword id="KW-1003">Cell membrane</keyword>
<keyword id="KW-0136">Cellulose degradation</keyword>
<keyword id="KW-0325">Glycoprotein</keyword>
<keyword id="KW-0326">Glycosidase</keyword>
<keyword id="KW-0336">GPI-anchor</keyword>
<keyword id="KW-0378">Hydrolase</keyword>
<keyword id="KW-0449">Lipoprotein</keyword>
<keyword id="KW-0472">Membrane</keyword>
<keyword id="KW-0624">Polysaccharide degradation</keyword>
<keyword id="KW-1185">Reference proteome</keyword>
<keyword id="KW-0732">Signal</keyword>
<comment type="function">
    <text evidence="1">Mixed-linked glucanase involved in the degradation of complex natural cellulosic substrates.</text>
</comment>
<comment type="catalytic activity">
    <reaction>
        <text>Endohydrolysis of (1-&gt;3)- or (1-&gt;4)-linkages in beta-D-glucans when the glucose residue whose reducing group is involved in the linkage to be hydrolyzed is itself substituted at C-3.</text>
        <dbReference type="EC" id="3.2.1.6"/>
    </reaction>
</comment>
<comment type="subcellular location">
    <subcellularLocation>
        <location evidence="1">Cell membrane</location>
        <topology evidence="1">Lipid-anchor</topology>
        <topology evidence="1">GPI-anchor</topology>
    </subcellularLocation>
</comment>
<comment type="similarity">
    <text evidence="5">Belongs to the glycosyl hydrolase 16 family.</text>
</comment>
<accession>Q4X084</accession>
<protein>
    <recommendedName>
        <fullName>Probable endo-1,3(4)-beta-glucanase AFUA_2G14360</fullName>
        <ecNumber>3.2.1.6</ecNumber>
    </recommendedName>
    <alternativeName>
        <fullName>Mixed-linked glucanase AFUA_2G14360</fullName>
    </alternativeName>
</protein>
<evidence type="ECO:0000250" key="1"/>
<evidence type="ECO:0000255" key="2"/>
<evidence type="ECO:0000255" key="3">
    <source>
        <dbReference type="PROSITE-ProRule" id="PRU01098"/>
    </source>
</evidence>
<evidence type="ECO:0000256" key="4">
    <source>
        <dbReference type="SAM" id="MobiDB-lite"/>
    </source>
</evidence>
<evidence type="ECO:0000305" key="5"/>
<name>EGLX_ASPFU</name>
<organism>
    <name type="scientific">Aspergillus fumigatus (strain ATCC MYA-4609 / CBS 101355 / FGSC A1100 / Af293)</name>
    <name type="common">Neosartorya fumigata</name>
    <dbReference type="NCBI Taxonomy" id="330879"/>
    <lineage>
        <taxon>Eukaryota</taxon>
        <taxon>Fungi</taxon>
        <taxon>Dikarya</taxon>
        <taxon>Ascomycota</taxon>
        <taxon>Pezizomycotina</taxon>
        <taxon>Eurotiomycetes</taxon>
        <taxon>Eurotiomycetidae</taxon>
        <taxon>Eurotiales</taxon>
        <taxon>Aspergillaceae</taxon>
        <taxon>Aspergillus</taxon>
        <taxon>Aspergillus subgen. Fumigati</taxon>
    </lineage>
</organism>
<proteinExistence type="inferred from homology"/>
<gene>
    <name type="ORF">AFUA_2G14360</name>
</gene>
<dbReference type="EC" id="3.2.1.6"/>
<dbReference type="EMBL" id="AAHF01000001">
    <property type="protein sequence ID" value="EAL93731.1"/>
    <property type="molecule type" value="Genomic_DNA"/>
</dbReference>
<dbReference type="RefSeq" id="XP_755769.1">
    <property type="nucleotide sequence ID" value="XM_750676.1"/>
</dbReference>
<dbReference type="SMR" id="Q4X084"/>
<dbReference type="STRING" id="330879.Q4X084"/>
<dbReference type="CAZy" id="GH16">
    <property type="family name" value="Glycoside Hydrolase Family 16"/>
</dbReference>
<dbReference type="EnsemblFungi" id="EAL93731">
    <property type="protein sequence ID" value="EAL93731"/>
    <property type="gene ID" value="AFUA_2G14360"/>
</dbReference>
<dbReference type="GeneID" id="3513747"/>
<dbReference type="KEGG" id="afm:AFUA_2G14360"/>
<dbReference type="VEuPathDB" id="FungiDB:Afu2g14360"/>
<dbReference type="eggNOG" id="ENOG502QUM3">
    <property type="taxonomic scope" value="Eukaryota"/>
</dbReference>
<dbReference type="HOGENOM" id="CLU_016972_4_0_1"/>
<dbReference type="InParanoid" id="Q4X084"/>
<dbReference type="OMA" id="FYMGVDY"/>
<dbReference type="OrthoDB" id="192832at2759"/>
<dbReference type="BRENDA" id="3.2.1.6">
    <property type="organism ID" value="508"/>
</dbReference>
<dbReference type="Proteomes" id="UP000002530">
    <property type="component" value="Chromosome 2"/>
</dbReference>
<dbReference type="GO" id="GO:0005886">
    <property type="term" value="C:plasma membrane"/>
    <property type="evidence" value="ECO:0007669"/>
    <property type="project" value="UniProtKB-SubCell"/>
</dbReference>
<dbReference type="GO" id="GO:0098552">
    <property type="term" value="C:side of membrane"/>
    <property type="evidence" value="ECO:0007669"/>
    <property type="project" value="UniProtKB-KW"/>
</dbReference>
<dbReference type="GO" id="GO:0052861">
    <property type="term" value="F:endo-1,3(4)-beta-glucanase activity"/>
    <property type="evidence" value="ECO:0000314"/>
    <property type="project" value="AspGD"/>
</dbReference>
<dbReference type="GO" id="GO:0030245">
    <property type="term" value="P:cellulose catabolic process"/>
    <property type="evidence" value="ECO:0007669"/>
    <property type="project" value="UniProtKB-KW"/>
</dbReference>
<dbReference type="GO" id="GO:0009251">
    <property type="term" value="P:glucan catabolic process"/>
    <property type="evidence" value="ECO:0000318"/>
    <property type="project" value="GO_Central"/>
</dbReference>
<dbReference type="CDD" id="cd02181">
    <property type="entry name" value="GH16_fungal_Lam16A_glucanase"/>
    <property type="match status" value="1"/>
</dbReference>
<dbReference type="FunFam" id="2.60.120.200:FF:000114">
    <property type="entry name" value="Probable endo-1,3(4)-beta-glucanase NFIA_089530"/>
    <property type="match status" value="1"/>
</dbReference>
<dbReference type="Gene3D" id="2.60.120.200">
    <property type="match status" value="1"/>
</dbReference>
<dbReference type="InterPro" id="IPR013320">
    <property type="entry name" value="ConA-like_dom_sf"/>
</dbReference>
<dbReference type="InterPro" id="IPR000757">
    <property type="entry name" value="GH16"/>
</dbReference>
<dbReference type="InterPro" id="IPR050546">
    <property type="entry name" value="Glycosyl_Hydrlase_16"/>
</dbReference>
<dbReference type="PANTHER" id="PTHR10963:SF58">
    <property type="entry name" value="ENDO-1,3(4)-BETA-GLUCANASE XGEA"/>
    <property type="match status" value="1"/>
</dbReference>
<dbReference type="PANTHER" id="PTHR10963">
    <property type="entry name" value="GLYCOSYL HYDROLASE-RELATED"/>
    <property type="match status" value="1"/>
</dbReference>
<dbReference type="SUPFAM" id="SSF49899">
    <property type="entry name" value="Concanavalin A-like lectins/glucanases"/>
    <property type="match status" value="1"/>
</dbReference>
<dbReference type="PROSITE" id="PS51762">
    <property type="entry name" value="GH16_2"/>
    <property type="match status" value="1"/>
</dbReference>
<sequence length="652" mass="65993">MAPSSLLLSVGSLITSSLVSATALEARQSQTYQLAESWQGESFINDWNFFDGADPTNGYVTYVNQSFAKQSGLVKVTESGSFYMGVDYESTLNPNGAGRESVRIESKNYYTEGLYVIDIEHMPGSICGTWPAFWSVGKNWPNDGEIDIIEGVNLQKANKIVLHTSGSCDVSGSNDMTGTLSSSECGEASGTVGCVVKGTNGSSGDPFNESGGGVYAMEWTDTFIKIWFFPRSQIPASLASGNPDTSSFGTPMAHLQGSCDFAERFKAQKLIIDTTFCGDWAGNVFAESTCPMSDPSSPMQSCVNYVAQNPAAFKEAYWEINSIKIYQYGVSAASSAAVSQATASKVEGTRVSAQAANTATPTVPAPVETTTVPQPAQTNTVATSAADHATPSSAETTTVPAATGAPSVSATEGGDSELESTSTVYVTSTTTICPVAESSSAAAAGGKEDAPSNGTSGAEVAATSVAAAAPAAATSGHPGADAIANSAAATSTDAQSESATSRLTAGALSEIPTAPPEPVSQAVSTGSFDDSDTAQGDSEEQGSIASASVAPSTIPVPASSSAAALGGSSIASSFASSRLIPRPTGSSTAASATAIATWSPTAGESASGTAKESATLTTPSEVFFTPGLSNGANRMSVGLSGLIGVMFIAALA</sequence>
<reference key="1">
    <citation type="journal article" date="2005" name="Nature">
        <title>Genomic sequence of the pathogenic and allergenic filamentous fungus Aspergillus fumigatus.</title>
        <authorList>
            <person name="Nierman W.C."/>
            <person name="Pain A."/>
            <person name="Anderson M.J."/>
            <person name="Wortman J.R."/>
            <person name="Kim H.S."/>
            <person name="Arroyo J."/>
            <person name="Berriman M."/>
            <person name="Abe K."/>
            <person name="Archer D.B."/>
            <person name="Bermejo C."/>
            <person name="Bennett J.W."/>
            <person name="Bowyer P."/>
            <person name="Chen D."/>
            <person name="Collins M."/>
            <person name="Coulsen R."/>
            <person name="Davies R."/>
            <person name="Dyer P.S."/>
            <person name="Farman M.L."/>
            <person name="Fedorova N."/>
            <person name="Fedorova N.D."/>
            <person name="Feldblyum T.V."/>
            <person name="Fischer R."/>
            <person name="Fosker N."/>
            <person name="Fraser A."/>
            <person name="Garcia J.L."/>
            <person name="Garcia M.J."/>
            <person name="Goble A."/>
            <person name="Goldman G.H."/>
            <person name="Gomi K."/>
            <person name="Griffith-Jones S."/>
            <person name="Gwilliam R."/>
            <person name="Haas B.J."/>
            <person name="Haas H."/>
            <person name="Harris D.E."/>
            <person name="Horiuchi H."/>
            <person name="Huang J."/>
            <person name="Humphray S."/>
            <person name="Jimenez J."/>
            <person name="Keller N."/>
            <person name="Khouri H."/>
            <person name="Kitamoto K."/>
            <person name="Kobayashi T."/>
            <person name="Konzack S."/>
            <person name="Kulkarni R."/>
            <person name="Kumagai T."/>
            <person name="Lafton A."/>
            <person name="Latge J.-P."/>
            <person name="Li W."/>
            <person name="Lord A."/>
            <person name="Lu C."/>
            <person name="Majoros W.H."/>
            <person name="May G.S."/>
            <person name="Miller B.L."/>
            <person name="Mohamoud Y."/>
            <person name="Molina M."/>
            <person name="Monod M."/>
            <person name="Mouyna I."/>
            <person name="Mulligan S."/>
            <person name="Murphy L.D."/>
            <person name="O'Neil S."/>
            <person name="Paulsen I."/>
            <person name="Penalva M.A."/>
            <person name="Pertea M."/>
            <person name="Price C."/>
            <person name="Pritchard B.L."/>
            <person name="Quail M.A."/>
            <person name="Rabbinowitsch E."/>
            <person name="Rawlins N."/>
            <person name="Rajandream M.A."/>
            <person name="Reichard U."/>
            <person name="Renauld H."/>
            <person name="Robson G.D."/>
            <person name="Rodriguez de Cordoba S."/>
            <person name="Rodriguez-Pena J.M."/>
            <person name="Ronning C.M."/>
            <person name="Rutter S."/>
            <person name="Salzberg S.L."/>
            <person name="Sanchez M."/>
            <person name="Sanchez-Ferrero J.C."/>
            <person name="Saunders D."/>
            <person name="Seeger K."/>
            <person name="Squares R."/>
            <person name="Squares S."/>
            <person name="Takeuchi M."/>
            <person name="Tekaia F."/>
            <person name="Turner G."/>
            <person name="Vazquez de Aldana C.R."/>
            <person name="Weidman J."/>
            <person name="White O."/>
            <person name="Woodward J.R."/>
            <person name="Yu J.-H."/>
            <person name="Fraser C.M."/>
            <person name="Galagan J.E."/>
            <person name="Asai K."/>
            <person name="Machida M."/>
            <person name="Hall N."/>
            <person name="Barrell B.G."/>
            <person name="Denning D.W."/>
        </authorList>
    </citation>
    <scope>NUCLEOTIDE SEQUENCE [LARGE SCALE GENOMIC DNA]</scope>
    <source>
        <strain>ATCC MYA-4609 / CBS 101355 / FGSC A1100 / Af293</strain>
    </source>
</reference>